<gene>
    <name evidence="1" type="primary">rpl16</name>
    <name type="ordered locus">LopeCp079</name>
</gene>
<name>RK16_LOLPR</name>
<proteinExistence type="inferred from homology"/>
<accession>A8Y9C4</accession>
<feature type="chain" id="PRO_0000354644" description="Large ribosomal subunit protein uL16c">
    <location>
        <begin position="1"/>
        <end position="136"/>
    </location>
</feature>
<feature type="region of interest" description="Disordered" evidence="2">
    <location>
        <begin position="1"/>
        <end position="20"/>
    </location>
</feature>
<organism>
    <name type="scientific">Lolium perenne</name>
    <name type="common">Perennial ryegrass</name>
    <dbReference type="NCBI Taxonomy" id="4522"/>
    <lineage>
        <taxon>Eukaryota</taxon>
        <taxon>Viridiplantae</taxon>
        <taxon>Streptophyta</taxon>
        <taxon>Embryophyta</taxon>
        <taxon>Tracheophyta</taxon>
        <taxon>Spermatophyta</taxon>
        <taxon>Magnoliopsida</taxon>
        <taxon>Liliopsida</taxon>
        <taxon>Poales</taxon>
        <taxon>Poaceae</taxon>
        <taxon>BOP clade</taxon>
        <taxon>Pooideae</taxon>
        <taxon>Poodae</taxon>
        <taxon>Poeae</taxon>
        <taxon>Poeae Chloroplast Group 2 (Poeae type)</taxon>
        <taxon>Loliodinae</taxon>
        <taxon>Loliinae</taxon>
        <taxon>Lolium</taxon>
    </lineage>
</organism>
<protein>
    <recommendedName>
        <fullName evidence="1">Large ribosomal subunit protein uL16c</fullName>
    </recommendedName>
    <alternativeName>
        <fullName evidence="3">50S ribosomal protein L16, chloroplastic</fullName>
    </alternativeName>
</protein>
<keyword id="KW-0150">Chloroplast</keyword>
<keyword id="KW-0934">Plastid</keyword>
<keyword id="KW-0687">Ribonucleoprotein</keyword>
<keyword id="KW-0689">Ribosomal protein</keyword>
<reference key="1">
    <citation type="journal article" date="2008" name="PLoS ONE">
        <title>An optimized chloroplast DNA extraction protocol for grasses (Poaceae) proves suitable for whole plastid genome sequencing and SNP detection.</title>
        <authorList>
            <person name="Diekmann K."/>
            <person name="Hodkinson T.R."/>
            <person name="Fricke E."/>
            <person name="Barth S."/>
        </authorList>
    </citation>
    <scope>NUCLEOTIDE SEQUENCE [LARGE SCALE GENOMIC DNA]</scope>
    <source>
        <strain>cv. Cashel</strain>
    </source>
</reference>
<sequence>MLSPKRTRFRKQHRGRMKGKSCRGNRICFGRYALQALEPAWITARQIEAGRRAITRYARRGGKIWVRIFPDKPVTLRPTETRMGSGKGSPEYWVAIVKPGRILYEMGGVSETIARAAMEIAASKMPIRSQFIRLEI</sequence>
<evidence type="ECO:0000255" key="1">
    <source>
        <dbReference type="HAMAP-Rule" id="MF_01342"/>
    </source>
</evidence>
<evidence type="ECO:0000256" key="2">
    <source>
        <dbReference type="SAM" id="MobiDB-lite"/>
    </source>
</evidence>
<evidence type="ECO:0000305" key="3"/>
<geneLocation type="chloroplast"/>
<dbReference type="EMBL" id="AM777385">
    <property type="protein sequence ID" value="CAO86013.1"/>
    <property type="molecule type" value="Genomic_DNA"/>
</dbReference>
<dbReference type="RefSeq" id="YP_001531319.1">
    <property type="nucleotide sequence ID" value="NC_009950.1"/>
</dbReference>
<dbReference type="SMR" id="A8Y9C4"/>
<dbReference type="GeneID" id="5696538"/>
<dbReference type="KEGG" id="lper:5696538"/>
<dbReference type="GO" id="GO:0009507">
    <property type="term" value="C:chloroplast"/>
    <property type="evidence" value="ECO:0007669"/>
    <property type="project" value="UniProtKB-SubCell"/>
</dbReference>
<dbReference type="GO" id="GO:0005762">
    <property type="term" value="C:mitochondrial large ribosomal subunit"/>
    <property type="evidence" value="ECO:0007669"/>
    <property type="project" value="TreeGrafter"/>
</dbReference>
<dbReference type="GO" id="GO:0019843">
    <property type="term" value="F:rRNA binding"/>
    <property type="evidence" value="ECO:0007669"/>
    <property type="project" value="InterPro"/>
</dbReference>
<dbReference type="GO" id="GO:0003735">
    <property type="term" value="F:structural constituent of ribosome"/>
    <property type="evidence" value="ECO:0007669"/>
    <property type="project" value="InterPro"/>
</dbReference>
<dbReference type="GO" id="GO:0032543">
    <property type="term" value="P:mitochondrial translation"/>
    <property type="evidence" value="ECO:0007669"/>
    <property type="project" value="TreeGrafter"/>
</dbReference>
<dbReference type="CDD" id="cd01433">
    <property type="entry name" value="Ribosomal_L16_L10e"/>
    <property type="match status" value="1"/>
</dbReference>
<dbReference type="FunFam" id="3.90.1170.10:FF:000001">
    <property type="entry name" value="50S ribosomal protein L16"/>
    <property type="match status" value="1"/>
</dbReference>
<dbReference type="Gene3D" id="3.90.1170.10">
    <property type="entry name" value="Ribosomal protein L10e/L16"/>
    <property type="match status" value="1"/>
</dbReference>
<dbReference type="HAMAP" id="MF_01342">
    <property type="entry name" value="Ribosomal_uL16"/>
    <property type="match status" value="1"/>
</dbReference>
<dbReference type="InterPro" id="IPR047873">
    <property type="entry name" value="Ribosomal_uL16"/>
</dbReference>
<dbReference type="InterPro" id="IPR000114">
    <property type="entry name" value="Ribosomal_uL16_bact-type"/>
</dbReference>
<dbReference type="InterPro" id="IPR020798">
    <property type="entry name" value="Ribosomal_uL16_CS"/>
</dbReference>
<dbReference type="InterPro" id="IPR016180">
    <property type="entry name" value="Ribosomal_uL16_dom"/>
</dbReference>
<dbReference type="InterPro" id="IPR036920">
    <property type="entry name" value="Ribosomal_uL16_sf"/>
</dbReference>
<dbReference type="NCBIfam" id="TIGR01164">
    <property type="entry name" value="rplP_bact"/>
    <property type="match status" value="1"/>
</dbReference>
<dbReference type="PANTHER" id="PTHR12220">
    <property type="entry name" value="50S/60S RIBOSOMAL PROTEIN L16"/>
    <property type="match status" value="1"/>
</dbReference>
<dbReference type="PANTHER" id="PTHR12220:SF13">
    <property type="entry name" value="LARGE RIBOSOMAL SUBUNIT PROTEIN UL16M"/>
    <property type="match status" value="1"/>
</dbReference>
<dbReference type="Pfam" id="PF00252">
    <property type="entry name" value="Ribosomal_L16"/>
    <property type="match status" value="1"/>
</dbReference>
<dbReference type="PRINTS" id="PR00060">
    <property type="entry name" value="RIBOSOMALL16"/>
</dbReference>
<dbReference type="SUPFAM" id="SSF54686">
    <property type="entry name" value="Ribosomal protein L16p/L10e"/>
    <property type="match status" value="1"/>
</dbReference>
<dbReference type="PROSITE" id="PS00586">
    <property type="entry name" value="RIBOSOMAL_L16_1"/>
    <property type="match status" value="1"/>
</dbReference>
<dbReference type="PROSITE" id="PS00701">
    <property type="entry name" value="RIBOSOMAL_L16_2"/>
    <property type="match status" value="1"/>
</dbReference>
<comment type="subunit">
    <text evidence="1">Part of the 50S ribosomal subunit.</text>
</comment>
<comment type="subcellular location">
    <subcellularLocation>
        <location>Plastid</location>
        <location>Chloroplast</location>
    </subcellularLocation>
</comment>
<comment type="similarity">
    <text evidence="1">Belongs to the universal ribosomal protein uL16 family.</text>
</comment>